<dbReference type="EMBL" id="CP000284">
    <property type="protein sequence ID" value="ABE48576.1"/>
    <property type="molecule type" value="Genomic_DNA"/>
</dbReference>
<dbReference type="RefSeq" id="WP_011478673.1">
    <property type="nucleotide sequence ID" value="NC_007947.1"/>
</dbReference>
<dbReference type="SMR" id="Q1H4L1"/>
<dbReference type="STRING" id="265072.Mfla_0305"/>
<dbReference type="KEGG" id="mfa:Mfla_0305"/>
<dbReference type="eggNOG" id="COG0203">
    <property type="taxonomic scope" value="Bacteria"/>
</dbReference>
<dbReference type="HOGENOM" id="CLU_074407_2_0_4"/>
<dbReference type="OrthoDB" id="9809073at2"/>
<dbReference type="Proteomes" id="UP000002440">
    <property type="component" value="Chromosome"/>
</dbReference>
<dbReference type="GO" id="GO:0022625">
    <property type="term" value="C:cytosolic large ribosomal subunit"/>
    <property type="evidence" value="ECO:0007669"/>
    <property type="project" value="TreeGrafter"/>
</dbReference>
<dbReference type="GO" id="GO:0003735">
    <property type="term" value="F:structural constituent of ribosome"/>
    <property type="evidence" value="ECO:0007669"/>
    <property type="project" value="InterPro"/>
</dbReference>
<dbReference type="GO" id="GO:0006412">
    <property type="term" value="P:translation"/>
    <property type="evidence" value="ECO:0007669"/>
    <property type="project" value="UniProtKB-UniRule"/>
</dbReference>
<dbReference type="FunFam" id="3.90.1030.10:FF:000001">
    <property type="entry name" value="50S ribosomal protein L17"/>
    <property type="match status" value="1"/>
</dbReference>
<dbReference type="Gene3D" id="3.90.1030.10">
    <property type="entry name" value="Ribosomal protein L17"/>
    <property type="match status" value="1"/>
</dbReference>
<dbReference type="HAMAP" id="MF_01368">
    <property type="entry name" value="Ribosomal_bL17"/>
    <property type="match status" value="1"/>
</dbReference>
<dbReference type="InterPro" id="IPR000456">
    <property type="entry name" value="Ribosomal_bL17"/>
</dbReference>
<dbReference type="InterPro" id="IPR047859">
    <property type="entry name" value="Ribosomal_bL17_CS"/>
</dbReference>
<dbReference type="InterPro" id="IPR036373">
    <property type="entry name" value="Ribosomal_bL17_sf"/>
</dbReference>
<dbReference type="NCBIfam" id="TIGR00059">
    <property type="entry name" value="L17"/>
    <property type="match status" value="1"/>
</dbReference>
<dbReference type="PANTHER" id="PTHR14413:SF16">
    <property type="entry name" value="LARGE RIBOSOMAL SUBUNIT PROTEIN BL17M"/>
    <property type="match status" value="1"/>
</dbReference>
<dbReference type="PANTHER" id="PTHR14413">
    <property type="entry name" value="RIBOSOMAL PROTEIN L17"/>
    <property type="match status" value="1"/>
</dbReference>
<dbReference type="Pfam" id="PF01196">
    <property type="entry name" value="Ribosomal_L17"/>
    <property type="match status" value="1"/>
</dbReference>
<dbReference type="SUPFAM" id="SSF64263">
    <property type="entry name" value="Prokaryotic ribosomal protein L17"/>
    <property type="match status" value="1"/>
</dbReference>
<dbReference type="PROSITE" id="PS01167">
    <property type="entry name" value="RIBOSOMAL_L17"/>
    <property type="match status" value="1"/>
</dbReference>
<accession>Q1H4L1</accession>
<proteinExistence type="inferred from homology"/>
<sequence length="131" mass="14961">MRHRNSNRKLNRTSSHRQAMLRNMANSLLRHEIIKTTLPKAKELRRVAEPLITLGKDATLANRRLAFSRLRDRDIVGKLFNELGPRYQTRNGGYLRILKCGFRVGDNAPMALVELVDRPELATDGEVVTAE</sequence>
<protein>
    <recommendedName>
        <fullName evidence="1">Large ribosomal subunit protein bL17</fullName>
    </recommendedName>
    <alternativeName>
        <fullName evidence="2">50S ribosomal protein L17</fullName>
    </alternativeName>
</protein>
<organism>
    <name type="scientific">Methylobacillus flagellatus (strain ATCC 51484 / DSM 6875 / VKM B-1610 / KT)</name>
    <dbReference type="NCBI Taxonomy" id="265072"/>
    <lineage>
        <taxon>Bacteria</taxon>
        <taxon>Pseudomonadati</taxon>
        <taxon>Pseudomonadota</taxon>
        <taxon>Betaproteobacteria</taxon>
        <taxon>Nitrosomonadales</taxon>
        <taxon>Methylophilaceae</taxon>
        <taxon>Methylobacillus</taxon>
    </lineage>
</organism>
<reference key="1">
    <citation type="submission" date="2006-03" db="EMBL/GenBank/DDBJ databases">
        <title>Complete sequence of Methylobacillus flagellatus KT.</title>
        <authorList>
            <consortium name="US DOE Joint Genome Institute"/>
            <person name="Copeland A."/>
            <person name="Lucas S."/>
            <person name="Lapidus A."/>
            <person name="Barry K."/>
            <person name="Detter J.C."/>
            <person name="Glavina del Rio T."/>
            <person name="Hammon N."/>
            <person name="Israni S."/>
            <person name="Dalin E."/>
            <person name="Tice H."/>
            <person name="Pitluck S."/>
            <person name="Brettin T."/>
            <person name="Bruce D."/>
            <person name="Han C."/>
            <person name="Tapia R."/>
            <person name="Saunders E."/>
            <person name="Gilna P."/>
            <person name="Schmutz J."/>
            <person name="Larimer F."/>
            <person name="Land M."/>
            <person name="Kyrpides N."/>
            <person name="Anderson I."/>
            <person name="Richardson P."/>
        </authorList>
    </citation>
    <scope>NUCLEOTIDE SEQUENCE [LARGE SCALE GENOMIC DNA]</scope>
    <source>
        <strain>ATCC 51484 / DSM 6875 / VKM B-1610 / KT</strain>
    </source>
</reference>
<feature type="chain" id="PRO_0000267893" description="Large ribosomal subunit protein bL17">
    <location>
        <begin position="1"/>
        <end position="131"/>
    </location>
</feature>
<comment type="subunit">
    <text evidence="1">Part of the 50S ribosomal subunit. Contacts protein L32.</text>
</comment>
<comment type="similarity">
    <text evidence="1">Belongs to the bacterial ribosomal protein bL17 family.</text>
</comment>
<keyword id="KW-1185">Reference proteome</keyword>
<keyword id="KW-0687">Ribonucleoprotein</keyword>
<keyword id="KW-0689">Ribosomal protein</keyword>
<name>RL17_METFK</name>
<gene>
    <name evidence="1" type="primary">rplQ</name>
    <name type="ordered locus">Mfla_0305</name>
</gene>
<evidence type="ECO:0000255" key="1">
    <source>
        <dbReference type="HAMAP-Rule" id="MF_01368"/>
    </source>
</evidence>
<evidence type="ECO:0000305" key="2"/>